<protein>
    <recommendedName>
        <fullName>Protein Tob2</fullName>
    </recommendedName>
    <alternativeName>
        <fullName>Protein Tob4</fullName>
    </alternativeName>
    <alternativeName>
        <fullName>Transducer of erbB-2 2</fullName>
    </alternativeName>
</protein>
<accession>Q14106</accession>
<accession>Q6FHR7</accession>
<accession>Q6PIT9</accession>
<accession>Q9BY97</accession>
<accession>Q9UBI0</accession>
<sequence length="344" mass="36632">MQLEIKVALNFIISYLYNKLPRRRADLFGEELERLLKKKYEGHWYPEKPLKGSGFRCVHIGEMVDPVVELAAKRSGLAVEDVRANVPEELSVWIDPFEVSYQIGEKGAVKVLYLDDSEGCGAPELDKEIKSSFNPDAQVFVPIGSQDSSLSNSPSPSFGQSPSPTFIPRSAQPITFTTASFAATKFGSTKMKKGGGAASGGGVASSGAGGQQPPQQPRMARSPTNSLLKHKSLSLSMHSLNFITANPAPQSQLSPNAKEFVYNGGGSPSLFFDAADGQGSGTPGPFGGSGAGTCNSSSFDMAQVFGGGANSLFLEKTPFVEGLSYNLNTMQYPSQQFQPVVLAN</sequence>
<proteinExistence type="evidence at protein level"/>
<gene>
    <name type="primary">TOB2</name>
    <name type="synonym">KIAA1663</name>
    <name type="synonym">TOB4</name>
    <name type="synonym">TROB2</name>
</gene>
<dbReference type="EMBL" id="D64109">
    <property type="protein sequence ID" value="BAA10971.1"/>
    <property type="molecule type" value="mRNA"/>
</dbReference>
<dbReference type="EMBL" id="AB035207">
    <property type="protein sequence ID" value="BAA87042.1"/>
    <property type="molecule type" value="mRNA"/>
</dbReference>
<dbReference type="EMBL" id="AB051450">
    <property type="protein sequence ID" value="BAB33333.1"/>
    <property type="status" value="ALT_INIT"/>
    <property type="molecule type" value="mRNA"/>
</dbReference>
<dbReference type="EMBL" id="CR456594">
    <property type="protein sequence ID" value="CAG30480.1"/>
    <property type="molecule type" value="mRNA"/>
</dbReference>
<dbReference type="EMBL" id="CR541684">
    <property type="protein sequence ID" value="CAG46485.1"/>
    <property type="molecule type" value="mRNA"/>
</dbReference>
<dbReference type="EMBL" id="AL008582">
    <property type="status" value="NOT_ANNOTATED_CDS"/>
    <property type="molecule type" value="Genomic_DNA"/>
</dbReference>
<dbReference type="EMBL" id="BC028919">
    <property type="protein sequence ID" value="AAH28919.1"/>
    <property type="molecule type" value="mRNA"/>
</dbReference>
<dbReference type="EMBL" id="BC038957">
    <property type="protein sequence ID" value="AAH38957.1"/>
    <property type="molecule type" value="mRNA"/>
</dbReference>
<dbReference type="CCDS" id="CCDS14015.1">
    <molecule id="Q14106-1"/>
</dbReference>
<dbReference type="RefSeq" id="NP_057356.1">
    <molecule id="Q14106-1"/>
    <property type="nucleotide sequence ID" value="NM_016272.4"/>
</dbReference>
<dbReference type="RefSeq" id="XP_005261372.1">
    <molecule id="Q14106-1"/>
    <property type="nucleotide sequence ID" value="XM_005261315.3"/>
</dbReference>
<dbReference type="RefSeq" id="XP_006724168.1">
    <molecule id="Q14106-1"/>
    <property type="nucleotide sequence ID" value="XM_006724105.4"/>
</dbReference>
<dbReference type="RefSeq" id="XP_016884028.1">
    <molecule id="Q14106-1"/>
    <property type="nucleotide sequence ID" value="XM_017028539.2"/>
</dbReference>
<dbReference type="RefSeq" id="XP_054180967.1">
    <molecule id="Q14106-1"/>
    <property type="nucleotide sequence ID" value="XM_054324992.1"/>
</dbReference>
<dbReference type="RefSeq" id="XP_054180968.1">
    <molecule id="Q14106-1"/>
    <property type="nucleotide sequence ID" value="XM_054324993.1"/>
</dbReference>
<dbReference type="RefSeq" id="XP_054180969.1">
    <molecule id="Q14106-1"/>
    <property type="nucleotide sequence ID" value="XM_054324994.1"/>
</dbReference>
<dbReference type="SMR" id="Q14106"/>
<dbReference type="BioGRID" id="115985">
    <property type="interactions" value="32"/>
</dbReference>
<dbReference type="DIP" id="DIP-41990N"/>
<dbReference type="ELM" id="Q14106"/>
<dbReference type="FunCoup" id="Q14106">
    <property type="interactions" value="1927"/>
</dbReference>
<dbReference type="IntAct" id="Q14106">
    <property type="interactions" value="17"/>
</dbReference>
<dbReference type="MINT" id="Q14106"/>
<dbReference type="STRING" id="9606.ENSP00000331305"/>
<dbReference type="GlyGen" id="Q14106">
    <property type="glycosylation" value="1 site, 1 O-linked glycan (1 site)"/>
</dbReference>
<dbReference type="iPTMnet" id="Q14106"/>
<dbReference type="PhosphoSitePlus" id="Q14106"/>
<dbReference type="BioMuta" id="TOB2"/>
<dbReference type="DMDM" id="12643431"/>
<dbReference type="jPOST" id="Q14106"/>
<dbReference type="MassIVE" id="Q14106"/>
<dbReference type="PaxDb" id="9606-ENSP00000331305"/>
<dbReference type="PeptideAtlas" id="Q14106"/>
<dbReference type="ProteomicsDB" id="59815">
    <molecule id="Q14106-1"/>
</dbReference>
<dbReference type="Antibodypedia" id="26928">
    <property type="antibodies" value="153 antibodies from 26 providers"/>
</dbReference>
<dbReference type="DNASU" id="10766"/>
<dbReference type="Ensembl" id="ENST00000327492.4">
    <molecule id="Q14106-1"/>
    <property type="protein sequence ID" value="ENSP00000331305.3"/>
    <property type="gene ID" value="ENSG00000183864.6"/>
</dbReference>
<dbReference type="Ensembl" id="ENST00000434408.2">
    <molecule id="Q14106-1"/>
    <property type="protein sequence ID" value="ENSP00000388549.2"/>
    <property type="gene ID" value="ENSG00000183864.6"/>
</dbReference>
<dbReference type="GeneID" id="10766"/>
<dbReference type="KEGG" id="hsa:10766"/>
<dbReference type="MANE-Select" id="ENST00000327492.4">
    <property type="protein sequence ID" value="ENSP00000331305.3"/>
    <property type="RefSeq nucleotide sequence ID" value="NM_016272.4"/>
    <property type="RefSeq protein sequence ID" value="NP_057356.1"/>
</dbReference>
<dbReference type="UCSC" id="uc003azz.2">
    <molecule id="Q14106-1"/>
    <property type="organism name" value="human"/>
</dbReference>
<dbReference type="AGR" id="HGNC:11980"/>
<dbReference type="CTD" id="10766"/>
<dbReference type="DisGeNET" id="10766"/>
<dbReference type="GeneCards" id="TOB2"/>
<dbReference type="HGNC" id="HGNC:11980">
    <property type="gene designation" value="TOB2"/>
</dbReference>
<dbReference type="HPA" id="ENSG00000183864">
    <property type="expression patterns" value="Low tissue specificity"/>
</dbReference>
<dbReference type="MIM" id="607396">
    <property type="type" value="gene"/>
</dbReference>
<dbReference type="neXtProt" id="NX_Q14106"/>
<dbReference type="OpenTargets" id="ENSG00000183864"/>
<dbReference type="PharmGKB" id="PA36664"/>
<dbReference type="VEuPathDB" id="HostDB:ENSG00000183864"/>
<dbReference type="eggNOG" id="KOG4006">
    <property type="taxonomic scope" value="Eukaryota"/>
</dbReference>
<dbReference type="GeneTree" id="ENSGT00940000154208"/>
<dbReference type="HOGENOM" id="CLU_034687_0_0_1"/>
<dbReference type="InParanoid" id="Q14106"/>
<dbReference type="OMA" id="NGGISYM"/>
<dbReference type="OrthoDB" id="19928at2759"/>
<dbReference type="PAN-GO" id="Q14106">
    <property type="GO annotations" value="4 GO annotations based on evolutionary models"/>
</dbReference>
<dbReference type="PhylomeDB" id="Q14106"/>
<dbReference type="TreeFam" id="TF105274"/>
<dbReference type="PathwayCommons" id="Q14106"/>
<dbReference type="SignaLink" id="Q14106"/>
<dbReference type="SIGNOR" id="Q14106"/>
<dbReference type="BioGRID-ORCS" id="10766">
    <property type="hits" value="17 hits in 1159 CRISPR screens"/>
</dbReference>
<dbReference type="ChiTaRS" id="TOB2">
    <property type="organism name" value="human"/>
</dbReference>
<dbReference type="GeneWiki" id="TOB2"/>
<dbReference type="GenomeRNAi" id="10766"/>
<dbReference type="Pharos" id="Q14106">
    <property type="development level" value="Tbio"/>
</dbReference>
<dbReference type="PRO" id="PR:Q14106"/>
<dbReference type="Proteomes" id="UP000005640">
    <property type="component" value="Chromosome 22"/>
</dbReference>
<dbReference type="RNAct" id="Q14106">
    <property type="molecule type" value="protein"/>
</dbReference>
<dbReference type="Bgee" id="ENSG00000183864">
    <property type="expression patterns" value="Expressed in cranial nerve II and 210 other cell types or tissues"/>
</dbReference>
<dbReference type="ExpressionAtlas" id="Q14106">
    <property type="expression patterns" value="baseline and differential"/>
</dbReference>
<dbReference type="GO" id="GO:0005737">
    <property type="term" value="C:cytoplasm"/>
    <property type="evidence" value="ECO:0000318"/>
    <property type="project" value="GO_Central"/>
</dbReference>
<dbReference type="GO" id="GO:0005829">
    <property type="term" value="C:cytosol"/>
    <property type="evidence" value="ECO:0000314"/>
    <property type="project" value="HPA"/>
</dbReference>
<dbReference type="GO" id="GO:0005634">
    <property type="term" value="C:nucleus"/>
    <property type="evidence" value="ECO:0000318"/>
    <property type="project" value="GO_Central"/>
</dbReference>
<dbReference type="GO" id="GO:0042809">
    <property type="term" value="F:nuclear vitamin D receptor binding"/>
    <property type="evidence" value="ECO:0007669"/>
    <property type="project" value="Ensembl"/>
</dbReference>
<dbReference type="GO" id="GO:0003714">
    <property type="term" value="F:transcription corepressor activity"/>
    <property type="evidence" value="ECO:0000318"/>
    <property type="project" value="GO_Central"/>
</dbReference>
<dbReference type="GO" id="GO:0007292">
    <property type="term" value="P:female gamete generation"/>
    <property type="evidence" value="ECO:0000304"/>
    <property type="project" value="ProtInc"/>
</dbReference>
<dbReference type="GO" id="GO:0008285">
    <property type="term" value="P:negative regulation of cell population proliferation"/>
    <property type="evidence" value="ECO:0000304"/>
    <property type="project" value="ProtInc"/>
</dbReference>
<dbReference type="GO" id="GO:0045671">
    <property type="term" value="P:negative regulation of osteoclast differentiation"/>
    <property type="evidence" value="ECO:0007669"/>
    <property type="project" value="Ensembl"/>
</dbReference>
<dbReference type="GO" id="GO:0030316">
    <property type="term" value="P:osteoclast differentiation"/>
    <property type="evidence" value="ECO:0007669"/>
    <property type="project" value="Ensembl"/>
</dbReference>
<dbReference type="GO" id="GO:0045778">
    <property type="term" value="P:positive regulation of ossification"/>
    <property type="evidence" value="ECO:0007669"/>
    <property type="project" value="Ensembl"/>
</dbReference>
<dbReference type="GO" id="GO:0010468">
    <property type="term" value="P:regulation of gene expression"/>
    <property type="evidence" value="ECO:0000318"/>
    <property type="project" value="GO_Central"/>
</dbReference>
<dbReference type="FunFam" id="3.90.640.90:FF:000001">
    <property type="entry name" value="TOB1 isoform 1"/>
    <property type="match status" value="1"/>
</dbReference>
<dbReference type="Gene3D" id="3.90.640.90">
    <property type="entry name" value="Anti-proliferative protein, N-terminal domain"/>
    <property type="match status" value="1"/>
</dbReference>
<dbReference type="InterPro" id="IPR002087">
    <property type="entry name" value="Anti_prolifrtn"/>
</dbReference>
<dbReference type="InterPro" id="IPR036054">
    <property type="entry name" value="BTG-like_sf"/>
</dbReference>
<dbReference type="InterPro" id="IPR009818">
    <property type="entry name" value="PAM2_motif"/>
</dbReference>
<dbReference type="InterPro" id="IPR015676">
    <property type="entry name" value="Tob1/2"/>
</dbReference>
<dbReference type="PANTHER" id="PTHR17537:SF3">
    <property type="entry name" value="PROTEIN TOB2"/>
    <property type="match status" value="1"/>
</dbReference>
<dbReference type="PANTHER" id="PTHR17537">
    <property type="entry name" value="TRANSDUCER OF ERBB2 TOB"/>
    <property type="match status" value="1"/>
</dbReference>
<dbReference type="Pfam" id="PF07742">
    <property type="entry name" value="BTG"/>
    <property type="match status" value="1"/>
</dbReference>
<dbReference type="Pfam" id="PF07145">
    <property type="entry name" value="PAM2"/>
    <property type="match status" value="2"/>
</dbReference>
<dbReference type="PRINTS" id="PR00310">
    <property type="entry name" value="ANTIPRLFBTG1"/>
</dbReference>
<dbReference type="SMART" id="SM00099">
    <property type="entry name" value="btg1"/>
    <property type="match status" value="1"/>
</dbReference>
<dbReference type="SUPFAM" id="SSF160696">
    <property type="entry name" value="BTG domain-like"/>
    <property type="match status" value="1"/>
</dbReference>
<dbReference type="PROSITE" id="PS00960">
    <property type="entry name" value="BTG_1"/>
    <property type="match status" value="1"/>
</dbReference>
<dbReference type="PROSITE" id="PS01203">
    <property type="entry name" value="BTG_2"/>
    <property type="match status" value="1"/>
</dbReference>
<feature type="chain" id="PRO_0000143815" description="Protein Tob2">
    <location>
        <begin position="1"/>
        <end position="344"/>
    </location>
</feature>
<feature type="region of interest" description="Disordered" evidence="1">
    <location>
        <begin position="144"/>
        <end position="169"/>
    </location>
</feature>
<feature type="region of interest" description="Disordered" evidence="1">
    <location>
        <begin position="191"/>
        <end position="225"/>
    </location>
</feature>
<feature type="compositionally biased region" description="Low complexity" evidence="1">
    <location>
        <begin position="145"/>
        <end position="164"/>
    </location>
</feature>
<feature type="compositionally biased region" description="Gly residues" evidence="1">
    <location>
        <begin position="194"/>
        <end position="210"/>
    </location>
</feature>
<feature type="compositionally biased region" description="Low complexity" evidence="1">
    <location>
        <begin position="211"/>
        <end position="225"/>
    </location>
</feature>
<feature type="modified residue" description="Phosphoserine" evidence="4">
    <location>
        <position position="254"/>
    </location>
</feature>
<feature type="splice variant" id="VSP_055557" description="In isoform 2." evidence="2">
    <original>ANPAPQSQLSPNAKEFVYNGGGSPSLFFDAADGQGSGTPGPFGGSGAGTCNSSSFDMAQVFGGGANSLFLEKTPFVEGLSYNLNTMQYPSQQFQPVVLAN</original>
    <variation>DYNHDQ</variation>
    <location>
        <begin position="245"/>
        <end position="344"/>
    </location>
</feature>
<feature type="sequence conflict" description="In Ref. 1; BAA10971." evidence="3" ref="1">
    <original>RL</original>
    <variation>QA</variation>
    <location>
        <begin position="34"/>
        <end position="35"/>
    </location>
</feature>
<feature type="sequence conflict" description="In Ref. 1; BAA10971." evidence="3" ref="1">
    <original>P</original>
    <variation>H</variation>
    <location>
        <position position="214"/>
    </location>
</feature>
<feature type="sequence conflict" description="In Ref. 1; BAA10971." evidence="3" ref="1">
    <original>QGSGTPGPFGGSGAGTCNSSSFDMAQVFGGGANSLFLEKT</original>
    <variation>RAAAPQARLEAVGLAPATAAALTWPRYLEVVPTASSWRRH</variation>
    <location>
        <begin position="278"/>
        <end position="317"/>
    </location>
</feature>
<comment type="function">
    <text>Anti-proliferative protein inhibits cell cycle progression from the G0/G1 to S phases.</text>
</comment>
<comment type="subunit">
    <text>Associates with CAF1.</text>
</comment>
<comment type="interaction">
    <interactant intactId="EBI-2562000">
        <id>Q14106</id>
    </interactant>
    <interactant intactId="EBI-711810">
        <id>O14503</id>
        <label>BHLHE40</label>
    </interactant>
    <organismsDiffer>false</organismsDiffer>
    <experiments>3</experiments>
</comment>
<comment type="interaction">
    <interactant intactId="EBI-2562000">
        <id>Q14106</id>
    </interactant>
    <interactant intactId="EBI-742887">
        <id>Q8TAP6</id>
        <label>CEP76</label>
    </interactant>
    <organismsDiffer>false</organismsDiffer>
    <experiments>3</experiments>
</comment>
<comment type="interaction">
    <interactant intactId="EBI-2562000">
        <id>Q14106</id>
    </interactant>
    <interactant intactId="EBI-2105113">
        <id>Q9UIV1</id>
        <label>CNOT7</label>
    </interactant>
    <organismsDiffer>false</organismsDiffer>
    <experiments>8</experiments>
</comment>
<comment type="interaction">
    <interactant intactId="EBI-2562000">
        <id>Q14106</id>
    </interactant>
    <interactant intactId="EBI-742299">
        <id>Q9UFF9</id>
        <label>CNOT8</label>
    </interactant>
    <organismsDiffer>false</organismsDiffer>
    <experiments>3</experiments>
</comment>
<comment type="interaction">
    <interactant intactId="EBI-2562000">
        <id>Q14106</id>
    </interactant>
    <interactant intactId="EBI-81531">
        <id>P11940</id>
        <label>PABPC1</label>
    </interactant>
    <organismsDiffer>false</organismsDiffer>
    <experiments>5</experiments>
</comment>
<comment type="interaction">
    <interactant intactId="EBI-2562000">
        <id>Q14106</id>
    </interactant>
    <interactant intactId="EBI-2104739">
        <id>Q60809</id>
        <label>Cnot7</label>
    </interactant>
    <organismsDiffer>true</organismsDiffer>
    <experiments>4</experiments>
</comment>
<comment type="subcellular location">
    <subcellularLocation>
        <location>Cytoplasm</location>
    </subcellularLocation>
</comment>
<comment type="alternative products">
    <event type="alternative splicing"/>
    <isoform>
        <id>Q14106-1</id>
        <name>1</name>
        <sequence type="displayed"/>
    </isoform>
    <isoform>
        <id>Q14106-2</id>
        <name>2</name>
        <sequence type="described" ref="VSP_055557"/>
    </isoform>
</comment>
<comment type="tissue specificity">
    <text>Ubiquitous.</text>
</comment>
<comment type="similarity">
    <text evidence="3">Belongs to the BTG family.</text>
</comment>
<comment type="sequence caution" evidence="3">
    <conflict type="erroneous initiation">
        <sequence resource="EMBL-CDS" id="BAB33333"/>
    </conflict>
</comment>
<keyword id="KW-0025">Alternative splicing</keyword>
<keyword id="KW-0963">Cytoplasm</keyword>
<keyword id="KW-0597">Phosphoprotein</keyword>
<keyword id="KW-1267">Proteomics identification</keyword>
<keyword id="KW-1185">Reference proteome</keyword>
<reference key="1">
    <citation type="journal article" date="1999" name="Oncogene">
        <title>Tob2, a novel anti-proliferative Tob/BTG1 family member, associates with a component of the CCR4 transcriptional regulatory complex capable of binding cyclin-dependent kinases.</title>
        <authorList>
            <person name="Ikematsu N."/>
            <person name="Yoshida Y."/>
            <person name="Kawamura-Tsuzuku J."/>
            <person name="Ohsugi M."/>
            <person name="Onda M."/>
            <person name="Hirai M."/>
            <person name="Fujimoto J."/>
            <person name="Yamamoto T."/>
        </authorList>
    </citation>
    <scope>NUCLEOTIDE SEQUENCE [MRNA] (ISOFORM 1)</scope>
</reference>
<reference key="2">
    <citation type="journal article" date="2001" name="DNA Res.">
        <title>Identification of novel transcribed sequences on human chromosome 22 by expressed sequence tag mapping.</title>
        <authorList>
            <person name="Hirosawa M."/>
            <person name="Nagase T."/>
            <person name="Murahashi Y."/>
            <person name="Kikuno R."/>
            <person name="Ohara O."/>
        </authorList>
    </citation>
    <scope>NUCLEOTIDE SEQUENCE [LARGE SCALE MRNA] (ISOFORM 1)</scope>
</reference>
<reference key="3">
    <citation type="journal article" date="2004" name="Genome Biol.">
        <title>A genome annotation-driven approach to cloning the human ORFeome.</title>
        <authorList>
            <person name="Collins J.E."/>
            <person name="Wright C.L."/>
            <person name="Edwards C.A."/>
            <person name="Davis M.P."/>
            <person name="Grinham J.A."/>
            <person name="Cole C.G."/>
            <person name="Goward M.E."/>
            <person name="Aguado B."/>
            <person name="Mallya M."/>
            <person name="Mokrab Y."/>
            <person name="Huckle E.J."/>
            <person name="Beare D.M."/>
            <person name="Dunham I."/>
        </authorList>
    </citation>
    <scope>NUCLEOTIDE SEQUENCE [LARGE SCALE MRNA] (ISOFORM 1)</scope>
</reference>
<reference key="4">
    <citation type="submission" date="2004-06" db="EMBL/GenBank/DDBJ databases">
        <title>Cloning of human full open reading frames in Gateway(TM) system entry vector (pDONR201).</title>
        <authorList>
            <person name="Ebert L."/>
            <person name="Schick M."/>
            <person name="Neubert P."/>
            <person name="Schatten R."/>
            <person name="Henze S."/>
            <person name="Korn B."/>
        </authorList>
    </citation>
    <scope>NUCLEOTIDE SEQUENCE [LARGE SCALE MRNA] (ISOFORM 1)</scope>
</reference>
<reference key="5">
    <citation type="journal article" date="1999" name="Nature">
        <title>The DNA sequence of human chromosome 22.</title>
        <authorList>
            <person name="Dunham I."/>
            <person name="Hunt A.R."/>
            <person name="Collins J.E."/>
            <person name="Bruskiewich R."/>
            <person name="Beare D.M."/>
            <person name="Clamp M."/>
            <person name="Smink L.J."/>
            <person name="Ainscough R."/>
            <person name="Almeida J.P."/>
            <person name="Babbage A.K."/>
            <person name="Bagguley C."/>
            <person name="Bailey J."/>
            <person name="Barlow K.F."/>
            <person name="Bates K.N."/>
            <person name="Beasley O.P."/>
            <person name="Bird C.P."/>
            <person name="Blakey S.E."/>
            <person name="Bridgeman A.M."/>
            <person name="Buck D."/>
            <person name="Burgess J."/>
            <person name="Burrill W.D."/>
            <person name="Burton J."/>
            <person name="Carder C."/>
            <person name="Carter N.P."/>
            <person name="Chen Y."/>
            <person name="Clark G."/>
            <person name="Clegg S.M."/>
            <person name="Cobley V.E."/>
            <person name="Cole C.G."/>
            <person name="Collier R.E."/>
            <person name="Connor R."/>
            <person name="Conroy D."/>
            <person name="Corby N.R."/>
            <person name="Coville G.J."/>
            <person name="Cox A.V."/>
            <person name="Davis J."/>
            <person name="Dawson E."/>
            <person name="Dhami P.D."/>
            <person name="Dockree C."/>
            <person name="Dodsworth S.J."/>
            <person name="Durbin R.M."/>
            <person name="Ellington A.G."/>
            <person name="Evans K.L."/>
            <person name="Fey J.M."/>
            <person name="Fleming K."/>
            <person name="French L."/>
            <person name="Garner A.A."/>
            <person name="Gilbert J.G.R."/>
            <person name="Goward M.E."/>
            <person name="Grafham D.V."/>
            <person name="Griffiths M.N.D."/>
            <person name="Hall C."/>
            <person name="Hall R.E."/>
            <person name="Hall-Tamlyn G."/>
            <person name="Heathcott R.W."/>
            <person name="Ho S."/>
            <person name="Holmes S."/>
            <person name="Hunt S.E."/>
            <person name="Jones M.C."/>
            <person name="Kershaw J."/>
            <person name="Kimberley A.M."/>
            <person name="King A."/>
            <person name="Laird G.K."/>
            <person name="Langford C.F."/>
            <person name="Leversha M.A."/>
            <person name="Lloyd C."/>
            <person name="Lloyd D.M."/>
            <person name="Martyn I.D."/>
            <person name="Mashreghi-Mohammadi M."/>
            <person name="Matthews L.H."/>
            <person name="Mccann O.T."/>
            <person name="Mcclay J."/>
            <person name="Mclaren S."/>
            <person name="McMurray A.A."/>
            <person name="Milne S.A."/>
            <person name="Mortimore B.J."/>
            <person name="Odell C.N."/>
            <person name="Pavitt R."/>
            <person name="Pearce A.V."/>
            <person name="Pearson D."/>
            <person name="Phillimore B.J.C.T."/>
            <person name="Phillips S.H."/>
            <person name="Plumb R.W."/>
            <person name="Ramsay H."/>
            <person name="Ramsey Y."/>
            <person name="Rogers L."/>
            <person name="Ross M.T."/>
            <person name="Scott C.E."/>
            <person name="Sehra H.K."/>
            <person name="Skuce C.D."/>
            <person name="Smalley S."/>
            <person name="Smith M.L."/>
            <person name="Soderlund C."/>
            <person name="Spragon L."/>
            <person name="Steward C.A."/>
            <person name="Sulston J.E."/>
            <person name="Swann R.M."/>
            <person name="Vaudin M."/>
            <person name="Wall M."/>
            <person name="Wallis J.M."/>
            <person name="Whiteley M.N."/>
            <person name="Willey D.L."/>
            <person name="Williams L."/>
            <person name="Williams S.A."/>
            <person name="Williamson H."/>
            <person name="Wilmer T.E."/>
            <person name="Wilming L."/>
            <person name="Wright C.L."/>
            <person name="Hubbard T."/>
            <person name="Bentley D.R."/>
            <person name="Beck S."/>
            <person name="Rogers J."/>
            <person name="Shimizu N."/>
            <person name="Minoshima S."/>
            <person name="Kawasaki K."/>
            <person name="Sasaki T."/>
            <person name="Asakawa S."/>
            <person name="Kudoh J."/>
            <person name="Shintani A."/>
            <person name="Shibuya K."/>
            <person name="Yoshizaki Y."/>
            <person name="Aoki N."/>
            <person name="Mitsuyama S."/>
            <person name="Roe B.A."/>
            <person name="Chen F."/>
            <person name="Chu L."/>
            <person name="Crabtree J."/>
            <person name="Deschamps S."/>
            <person name="Do A."/>
            <person name="Do T."/>
            <person name="Dorman A."/>
            <person name="Fang F."/>
            <person name="Fu Y."/>
            <person name="Hu P."/>
            <person name="Hua A."/>
            <person name="Kenton S."/>
            <person name="Lai H."/>
            <person name="Lao H.I."/>
            <person name="Lewis J."/>
            <person name="Lewis S."/>
            <person name="Lin S.-P."/>
            <person name="Loh P."/>
            <person name="Malaj E."/>
            <person name="Nguyen T."/>
            <person name="Pan H."/>
            <person name="Phan S."/>
            <person name="Qi S."/>
            <person name="Qian Y."/>
            <person name="Ray L."/>
            <person name="Ren Q."/>
            <person name="Shaull S."/>
            <person name="Sloan D."/>
            <person name="Song L."/>
            <person name="Wang Q."/>
            <person name="Wang Y."/>
            <person name="Wang Z."/>
            <person name="White J."/>
            <person name="Willingham D."/>
            <person name="Wu H."/>
            <person name="Yao Z."/>
            <person name="Zhan M."/>
            <person name="Zhang G."/>
            <person name="Chissoe S."/>
            <person name="Murray J."/>
            <person name="Miller N."/>
            <person name="Minx P."/>
            <person name="Fulton R."/>
            <person name="Johnson D."/>
            <person name="Bemis G."/>
            <person name="Bentley D."/>
            <person name="Bradshaw H."/>
            <person name="Bourne S."/>
            <person name="Cordes M."/>
            <person name="Du Z."/>
            <person name="Fulton L."/>
            <person name="Goela D."/>
            <person name="Graves T."/>
            <person name="Hawkins J."/>
            <person name="Hinds K."/>
            <person name="Kemp K."/>
            <person name="Latreille P."/>
            <person name="Layman D."/>
            <person name="Ozersky P."/>
            <person name="Rohlfing T."/>
            <person name="Scheet P."/>
            <person name="Walker C."/>
            <person name="Wamsley A."/>
            <person name="Wohldmann P."/>
            <person name="Pepin K."/>
            <person name="Nelson J."/>
            <person name="Korf I."/>
            <person name="Bedell J.A."/>
            <person name="Hillier L.W."/>
            <person name="Mardis E."/>
            <person name="Waterston R."/>
            <person name="Wilson R."/>
            <person name="Emanuel B.S."/>
            <person name="Shaikh T."/>
            <person name="Kurahashi H."/>
            <person name="Saitta S."/>
            <person name="Budarf M.L."/>
            <person name="McDermid H.E."/>
            <person name="Johnson A."/>
            <person name="Wong A.C.C."/>
            <person name="Morrow B.E."/>
            <person name="Edelmann L."/>
            <person name="Kim U.J."/>
            <person name="Shizuya H."/>
            <person name="Simon M.I."/>
            <person name="Dumanski J.P."/>
            <person name="Peyrard M."/>
            <person name="Kedra D."/>
            <person name="Seroussi E."/>
            <person name="Fransson I."/>
            <person name="Tapia I."/>
            <person name="Bruder C.E."/>
            <person name="O'Brien K.P."/>
            <person name="Wilkinson P."/>
            <person name="Bodenteich A."/>
            <person name="Hartman K."/>
            <person name="Hu X."/>
            <person name="Khan A.S."/>
            <person name="Lane L."/>
            <person name="Tilahun Y."/>
            <person name="Wright H."/>
        </authorList>
    </citation>
    <scope>NUCLEOTIDE SEQUENCE [LARGE SCALE GENOMIC DNA]</scope>
</reference>
<reference key="6">
    <citation type="journal article" date="2004" name="Genome Res.">
        <title>The status, quality, and expansion of the NIH full-length cDNA project: the Mammalian Gene Collection (MGC).</title>
        <authorList>
            <consortium name="The MGC Project Team"/>
        </authorList>
    </citation>
    <scope>NUCLEOTIDE SEQUENCE [LARGE SCALE MRNA] (ISOFORMS 1 AND 2)</scope>
    <source>
        <tissue>Brain</tissue>
        <tissue>Uterus</tissue>
    </source>
</reference>
<reference key="7">
    <citation type="journal article" date="2009" name="Sci. Signal.">
        <title>Quantitative phosphoproteomic analysis of T cell receptor signaling reveals system-wide modulation of protein-protein interactions.</title>
        <authorList>
            <person name="Mayya V."/>
            <person name="Lundgren D.H."/>
            <person name="Hwang S.-I."/>
            <person name="Rezaul K."/>
            <person name="Wu L."/>
            <person name="Eng J.K."/>
            <person name="Rodionov V."/>
            <person name="Han D.K."/>
        </authorList>
    </citation>
    <scope>PHOSPHORYLATION [LARGE SCALE ANALYSIS] AT SER-254</scope>
    <scope>IDENTIFICATION BY MASS SPECTROMETRY [LARGE SCALE ANALYSIS]</scope>
    <source>
        <tissue>Leukemic T-cell</tissue>
    </source>
</reference>
<reference key="8">
    <citation type="journal article" date="2013" name="J. Proteome Res.">
        <title>Toward a comprehensive characterization of a human cancer cell phosphoproteome.</title>
        <authorList>
            <person name="Zhou H."/>
            <person name="Di Palma S."/>
            <person name="Preisinger C."/>
            <person name="Peng M."/>
            <person name="Polat A.N."/>
            <person name="Heck A.J."/>
            <person name="Mohammed S."/>
        </authorList>
    </citation>
    <scope>IDENTIFICATION BY MASS SPECTROMETRY [LARGE SCALE ANALYSIS]</scope>
    <source>
        <tissue>Cervix carcinoma</tissue>
        <tissue>Erythroleukemia</tissue>
    </source>
</reference>
<organism>
    <name type="scientific">Homo sapiens</name>
    <name type="common">Human</name>
    <dbReference type="NCBI Taxonomy" id="9606"/>
    <lineage>
        <taxon>Eukaryota</taxon>
        <taxon>Metazoa</taxon>
        <taxon>Chordata</taxon>
        <taxon>Craniata</taxon>
        <taxon>Vertebrata</taxon>
        <taxon>Euteleostomi</taxon>
        <taxon>Mammalia</taxon>
        <taxon>Eutheria</taxon>
        <taxon>Euarchontoglires</taxon>
        <taxon>Primates</taxon>
        <taxon>Haplorrhini</taxon>
        <taxon>Catarrhini</taxon>
        <taxon>Hominidae</taxon>
        <taxon>Homo</taxon>
    </lineage>
</organism>
<name>TOB2_HUMAN</name>
<evidence type="ECO:0000256" key="1">
    <source>
        <dbReference type="SAM" id="MobiDB-lite"/>
    </source>
</evidence>
<evidence type="ECO:0000303" key="2">
    <source>
    </source>
</evidence>
<evidence type="ECO:0000305" key="3"/>
<evidence type="ECO:0007744" key="4">
    <source>
    </source>
</evidence>